<gene>
    <name type="primary">SPL2</name>
    <name type="ordered locus">YHR136C</name>
</gene>
<dbReference type="EMBL" id="Y13625">
    <property type="protein sequence ID" value="CAA73949.1"/>
    <property type="molecule type" value="Genomic_DNA"/>
</dbReference>
<dbReference type="EMBL" id="U10398">
    <property type="protein sequence ID" value="AAB68421.1"/>
    <property type="molecule type" value="Genomic_DNA"/>
</dbReference>
<dbReference type="EMBL" id="AY693121">
    <property type="protein sequence ID" value="AAT93140.1"/>
    <property type="molecule type" value="Genomic_DNA"/>
</dbReference>
<dbReference type="EMBL" id="BK006934">
    <property type="protein sequence ID" value="DAA06829.1"/>
    <property type="molecule type" value="Genomic_DNA"/>
</dbReference>
<dbReference type="PIR" id="S48980">
    <property type="entry name" value="S48980"/>
</dbReference>
<dbReference type="RefSeq" id="NP_012004.1">
    <property type="nucleotide sequence ID" value="NM_001179266.1"/>
</dbReference>
<dbReference type="SMR" id="P38839"/>
<dbReference type="BioGRID" id="36569">
    <property type="interactions" value="55"/>
</dbReference>
<dbReference type="DIP" id="DIP-4089N"/>
<dbReference type="FunCoup" id="P38839">
    <property type="interactions" value="133"/>
</dbReference>
<dbReference type="IntAct" id="P38839">
    <property type="interactions" value="4"/>
</dbReference>
<dbReference type="MINT" id="P38839"/>
<dbReference type="STRING" id="4932.YHR136C"/>
<dbReference type="iPTMnet" id="P38839"/>
<dbReference type="PaxDb" id="4932-YHR136C"/>
<dbReference type="PeptideAtlas" id="P38839"/>
<dbReference type="EnsemblFungi" id="YHR136C_mRNA">
    <property type="protein sequence ID" value="YHR136C"/>
    <property type="gene ID" value="YHR136C"/>
</dbReference>
<dbReference type="GeneID" id="856538"/>
<dbReference type="KEGG" id="sce:YHR136C"/>
<dbReference type="AGR" id="SGD:S000001178"/>
<dbReference type="SGD" id="S000001178">
    <property type="gene designation" value="SPL2"/>
</dbReference>
<dbReference type="VEuPathDB" id="FungiDB:YHR136C"/>
<dbReference type="HOGENOM" id="CLU_2051493_0_0_1"/>
<dbReference type="InParanoid" id="P38839"/>
<dbReference type="OMA" id="IWVFTES"/>
<dbReference type="OrthoDB" id="4063451at2759"/>
<dbReference type="BioCyc" id="YEAST:G3O-31173-MONOMER"/>
<dbReference type="BioGRID-ORCS" id="856538">
    <property type="hits" value="0 hits in 10 CRISPR screens"/>
</dbReference>
<dbReference type="PRO" id="PR:P38839"/>
<dbReference type="Proteomes" id="UP000002311">
    <property type="component" value="Chromosome VIII"/>
</dbReference>
<dbReference type="RNAct" id="P38839">
    <property type="molecule type" value="protein"/>
</dbReference>
<dbReference type="GO" id="GO:0005737">
    <property type="term" value="C:cytoplasm"/>
    <property type="evidence" value="ECO:0007005"/>
    <property type="project" value="SGD"/>
</dbReference>
<dbReference type="GO" id="GO:0004861">
    <property type="term" value="F:cyclin-dependent protein serine/threonine kinase inhibitor activity"/>
    <property type="evidence" value="ECO:0000250"/>
    <property type="project" value="SGD"/>
</dbReference>
<dbReference type="GO" id="GO:0006623">
    <property type="term" value="P:protein targeting to vacuole"/>
    <property type="evidence" value="ECO:0000315"/>
    <property type="project" value="SGD"/>
</dbReference>
<accession>P38839</accession>
<accession>D3DL85</accession>
<accession>P87290</accession>
<proteinExistence type="evidence at protein level"/>
<protein>
    <recommendedName>
        <fullName>Putative cyclin-dependent kinase inhibitor SPL2</fullName>
    </recommendedName>
    <alternativeName>
        <fullName>Suppressor of PLC1 deletion protein 2</fullName>
    </alternativeName>
</protein>
<feature type="chain" id="PRO_0000202920" description="Putative cyclin-dependent kinase inhibitor SPL2">
    <location>
        <begin position="1"/>
        <end position="148"/>
    </location>
</feature>
<feature type="modified residue" description="Phosphoserine" evidence="8">
    <location>
        <position position="59"/>
    </location>
</feature>
<feature type="modified residue" description="Phosphoserine" evidence="8 9">
    <location>
        <position position="86"/>
    </location>
</feature>
<feature type="sequence conflict" description="In Ref. 1; CAA73949." evidence="7" ref="1">
    <original>L</original>
    <variation>P</variation>
    <location>
        <position position="58"/>
    </location>
</feature>
<name>SPL2_YEAST</name>
<reference key="1">
    <citation type="journal article" date="1998" name="Mol. Gen. Genet.">
        <title>Characterisation of Saccharomyces cerevisiae ARO8 and ARO9 genes encoding aromatic aminotransferases I and II reveals a new aminotransferase subfamily.</title>
        <authorList>
            <person name="Iraqui I."/>
            <person name="Vissers S."/>
            <person name="Cartiaux M."/>
            <person name="Urrestarazu A."/>
        </authorList>
    </citation>
    <scope>NUCLEOTIDE SEQUENCE [GENOMIC DNA]</scope>
    <source>
        <strain>Sigma 1278B</strain>
    </source>
</reference>
<reference key="2">
    <citation type="journal article" date="1994" name="Science">
        <title>Complete nucleotide sequence of Saccharomyces cerevisiae chromosome VIII.</title>
        <authorList>
            <person name="Johnston M."/>
            <person name="Andrews S."/>
            <person name="Brinkman R."/>
            <person name="Cooper J."/>
            <person name="Ding H."/>
            <person name="Dover J."/>
            <person name="Du Z."/>
            <person name="Favello A."/>
            <person name="Fulton L."/>
            <person name="Gattung S."/>
            <person name="Geisel C."/>
            <person name="Kirsten J."/>
            <person name="Kucaba T."/>
            <person name="Hillier L.W."/>
            <person name="Jier M."/>
            <person name="Johnston L."/>
            <person name="Langston Y."/>
            <person name="Latreille P."/>
            <person name="Louis E.J."/>
            <person name="Macri C."/>
            <person name="Mardis E."/>
            <person name="Menezes S."/>
            <person name="Mouser L."/>
            <person name="Nhan M."/>
            <person name="Rifkin L."/>
            <person name="Riles L."/>
            <person name="St Peter H."/>
            <person name="Trevaskis E."/>
            <person name="Vaughan K."/>
            <person name="Vignati D."/>
            <person name="Wilcox L."/>
            <person name="Wohldman P."/>
            <person name="Waterston R."/>
            <person name="Wilson R."/>
            <person name="Vaudin M."/>
        </authorList>
    </citation>
    <scope>NUCLEOTIDE SEQUENCE [LARGE SCALE GENOMIC DNA]</scope>
    <source>
        <strain>ATCC 204508 / S288c</strain>
    </source>
</reference>
<reference key="3">
    <citation type="journal article" date="2014" name="G3 (Bethesda)">
        <title>The reference genome sequence of Saccharomyces cerevisiae: Then and now.</title>
        <authorList>
            <person name="Engel S.R."/>
            <person name="Dietrich F.S."/>
            <person name="Fisk D.G."/>
            <person name="Binkley G."/>
            <person name="Balakrishnan R."/>
            <person name="Costanzo M.C."/>
            <person name="Dwight S.S."/>
            <person name="Hitz B.C."/>
            <person name="Karra K."/>
            <person name="Nash R.S."/>
            <person name="Weng S."/>
            <person name="Wong E.D."/>
            <person name="Lloyd P."/>
            <person name="Skrzypek M.S."/>
            <person name="Miyasato S.R."/>
            <person name="Simison M."/>
            <person name="Cherry J.M."/>
        </authorList>
    </citation>
    <scope>GENOME REANNOTATION</scope>
    <source>
        <strain>ATCC 204508 / S288c</strain>
    </source>
</reference>
<reference key="4">
    <citation type="journal article" date="2007" name="Genome Res.">
        <title>Approaching a complete repository of sequence-verified protein-encoding clones for Saccharomyces cerevisiae.</title>
        <authorList>
            <person name="Hu Y."/>
            <person name="Rolfs A."/>
            <person name="Bhullar B."/>
            <person name="Murthy T.V.S."/>
            <person name="Zhu C."/>
            <person name="Berger M.F."/>
            <person name="Camargo A.A."/>
            <person name="Kelley F."/>
            <person name="McCarron S."/>
            <person name="Jepson D."/>
            <person name="Richardson A."/>
            <person name="Raphael J."/>
            <person name="Moreira D."/>
            <person name="Taycher E."/>
            <person name="Zuo D."/>
            <person name="Mohr S."/>
            <person name="Kane M.F."/>
            <person name="Williamson J."/>
            <person name="Simpson A.J.G."/>
            <person name="Bulyk M.L."/>
            <person name="Harlow E."/>
            <person name="Marsischky G."/>
            <person name="Kolodner R.D."/>
            <person name="LaBaer J."/>
        </authorList>
    </citation>
    <scope>NUCLEOTIDE SEQUENCE [GENOMIC DNA]</scope>
    <source>
        <strain>ATCC 204508 / S288c</strain>
    </source>
</reference>
<reference key="5">
    <citation type="journal article" date="1998" name="Genetics">
        <title>An essential function of a phosphoinositide-specific phospholipase C is relieved by inhibition of a cyclin-dependent protein kinase in the yeast Saccharomyces cerevisiae.</title>
        <authorList>
            <person name="Flick J.S."/>
            <person name="Thorner J."/>
        </authorList>
    </citation>
    <scope>FUNCTION</scope>
    <scope>INDUCTION</scope>
</reference>
<reference key="6">
    <citation type="journal article" date="2000" name="Mol. Biol. Cell">
        <title>New components of a system for phosphate accumulation and polyphosphate metabolism in Saccharomyces cerevisiae revealed by genomic expression analysis.</title>
        <authorList>
            <person name="Ogawa N."/>
            <person name="DeRisi J.L."/>
            <person name="Brown P.O."/>
        </authorList>
    </citation>
    <scope>INDUCTION</scope>
</reference>
<reference key="7">
    <citation type="journal article" date="2003" name="J. Biol. Chem.">
        <title>The genome-wide transcriptional responses of Saccharomyces cerevisiae grown on glucose in aerobic chemostat cultures limited for carbon, nitrogen, phosphorus, or sulfur.</title>
        <authorList>
            <person name="Boer V.M."/>
            <person name="de Winde J.H."/>
            <person name="Pronk J.T."/>
            <person name="Piper M.D.W."/>
        </authorList>
    </citation>
    <scope>INDUCTION</scope>
</reference>
<reference key="8">
    <citation type="journal article" date="2003" name="Nature">
        <title>Global analysis of protein localization in budding yeast.</title>
        <authorList>
            <person name="Huh W.-K."/>
            <person name="Falvo J.V."/>
            <person name="Gerke L.C."/>
            <person name="Carroll A.S."/>
            <person name="Howson R.W."/>
            <person name="Weissman J.S."/>
            <person name="O'Shea E.K."/>
        </authorList>
    </citation>
    <scope>SUBCELLULAR LOCATION [LARGE SCALE ANALYSIS]</scope>
</reference>
<reference key="9">
    <citation type="journal article" date="2003" name="Nature">
        <title>Global analysis of protein expression in yeast.</title>
        <authorList>
            <person name="Ghaemmaghami S."/>
            <person name="Huh W.-K."/>
            <person name="Bower K."/>
            <person name="Howson R.W."/>
            <person name="Belle A."/>
            <person name="Dephoure N."/>
            <person name="O'Shea E.K."/>
            <person name="Weissman J.S."/>
        </authorList>
    </citation>
    <scope>LEVEL OF PROTEIN EXPRESSION [LARGE SCALE ANALYSIS]</scope>
</reference>
<reference key="10">
    <citation type="journal article" date="2007" name="J. Proteome Res.">
        <title>Large-scale phosphorylation analysis of alpha-factor-arrested Saccharomyces cerevisiae.</title>
        <authorList>
            <person name="Li X."/>
            <person name="Gerber S.A."/>
            <person name="Rudner A.D."/>
            <person name="Beausoleil S.A."/>
            <person name="Haas W."/>
            <person name="Villen J."/>
            <person name="Elias J.E."/>
            <person name="Gygi S.P."/>
        </authorList>
    </citation>
    <scope>PHOSPHORYLATION [LARGE SCALE ANALYSIS] AT SER-59 AND SER-86</scope>
    <scope>IDENTIFICATION BY MASS SPECTROMETRY [LARGE SCALE ANALYSIS]</scope>
    <source>
        <strain>ADR376</strain>
    </source>
</reference>
<reference key="11">
    <citation type="journal article" date="2007" name="Mol. Cell">
        <title>Positive feedback regulates switching of phosphate transporters in S. cerevisiae.</title>
        <authorList>
            <person name="Wykoff D.D."/>
            <person name="Rizvi A.H."/>
            <person name="Raser J.M."/>
            <person name="Margolin B."/>
            <person name="O'Shea E.K."/>
        </authorList>
    </citation>
    <scope>FUNCTION</scope>
</reference>
<reference key="12">
    <citation type="journal article" date="2008" name="Mol. Cell. Proteomics">
        <title>A multidimensional chromatography technology for in-depth phosphoproteome analysis.</title>
        <authorList>
            <person name="Albuquerque C.P."/>
            <person name="Smolka M.B."/>
            <person name="Payne S.H."/>
            <person name="Bafna V."/>
            <person name="Eng J."/>
            <person name="Zhou H."/>
        </authorList>
    </citation>
    <scope>PHOSPHORYLATION [LARGE SCALE ANALYSIS] AT SER-86</scope>
    <scope>IDENTIFICATION BY MASS SPECTROMETRY [LARGE SCALE ANALYSIS]</scope>
</reference>
<reference key="13">
    <citation type="journal article" date="2009" name="Science">
        <title>Global analysis of Cdk1 substrate phosphorylation sites provides insights into evolution.</title>
        <authorList>
            <person name="Holt L.J."/>
            <person name="Tuch B.B."/>
            <person name="Villen J."/>
            <person name="Johnson A.D."/>
            <person name="Gygi S.P."/>
            <person name="Morgan D.O."/>
        </authorList>
    </citation>
    <scope>IDENTIFICATION BY MASS SPECTROMETRY [LARGE SCALE ANALYSIS]</scope>
</reference>
<keyword id="KW-0963">Cytoplasm</keyword>
<keyword id="KW-0597">Phosphoprotein</keyword>
<keyword id="KW-0649">Protein kinase inhibitor</keyword>
<keyword id="KW-1185">Reference proteome</keyword>
<organism>
    <name type="scientific">Saccharomyces cerevisiae (strain ATCC 204508 / S288c)</name>
    <name type="common">Baker's yeast</name>
    <dbReference type="NCBI Taxonomy" id="559292"/>
    <lineage>
        <taxon>Eukaryota</taxon>
        <taxon>Fungi</taxon>
        <taxon>Dikarya</taxon>
        <taxon>Ascomycota</taxon>
        <taxon>Saccharomycotina</taxon>
        <taxon>Saccharomycetes</taxon>
        <taxon>Saccharomycetales</taxon>
        <taxon>Saccharomycetaceae</taxon>
        <taxon>Saccharomyces</taxon>
    </lineage>
</organism>
<comment type="function">
    <text evidence="5 6">Putative cyclin-dependent kinase (CDK) inhibitor necessary and sufficient for PHO pathway-dependent down-regulation of low-affinity phosphate transport.</text>
</comment>
<comment type="subcellular location">
    <subcellularLocation>
        <location evidence="3">Cytoplasmic granule</location>
    </subcellularLocation>
    <subcellularLocation>
        <location evidence="3">Cytoplasm</location>
    </subcellularLocation>
</comment>
<comment type="induction">
    <text evidence="1 2 6">Regulated by phosphate, probably through its PHO4-binding elements in the promoter.</text>
</comment>
<comment type="miscellaneous">
    <text evidence="4">Present with 2180 molecules/cell in log phase SD medium.</text>
</comment>
<sequence>MGTYTPLIYNIYNVHIWVFTESQGQIGQMSPRGKMETAVSQGQHKQLKDGHQHKGRKLSEEIASLLRLKECRRLNPASYYTPRRTSQSQSLSGSTFKEYNEYINEKDSSRAQRQNAAAVLSKLAHDFWENDCVIDEDIFEDSSDEEQS</sequence>
<evidence type="ECO:0000269" key="1">
    <source>
    </source>
</evidence>
<evidence type="ECO:0000269" key="2">
    <source>
    </source>
</evidence>
<evidence type="ECO:0000269" key="3">
    <source>
    </source>
</evidence>
<evidence type="ECO:0000269" key="4">
    <source>
    </source>
</evidence>
<evidence type="ECO:0000269" key="5">
    <source>
    </source>
</evidence>
<evidence type="ECO:0000269" key="6">
    <source>
    </source>
</evidence>
<evidence type="ECO:0000305" key="7"/>
<evidence type="ECO:0007744" key="8">
    <source>
    </source>
</evidence>
<evidence type="ECO:0007744" key="9">
    <source>
    </source>
</evidence>